<proteinExistence type="inferred from homology"/>
<feature type="chain" id="PRO_1000206043" description="Phosphoribosylformylglycinamidine synthase subunit PurL">
    <location>
        <begin position="1"/>
        <end position="762"/>
    </location>
</feature>
<feature type="active site" evidence="1">
    <location>
        <position position="58"/>
    </location>
</feature>
<feature type="active site" description="Proton acceptor" evidence="1">
    <location>
        <position position="109"/>
    </location>
</feature>
<feature type="binding site" evidence="1">
    <location>
        <position position="61"/>
    </location>
    <ligand>
        <name>ATP</name>
        <dbReference type="ChEBI" id="CHEBI:30616"/>
    </ligand>
</feature>
<feature type="binding site" evidence="1">
    <location>
        <position position="105"/>
    </location>
    <ligand>
        <name>ATP</name>
        <dbReference type="ChEBI" id="CHEBI:30616"/>
    </ligand>
</feature>
<feature type="binding site" evidence="1">
    <location>
        <position position="107"/>
    </location>
    <ligand>
        <name>Mg(2+)</name>
        <dbReference type="ChEBI" id="CHEBI:18420"/>
        <label>1</label>
    </ligand>
</feature>
<feature type="binding site" evidence="1">
    <location>
        <begin position="108"/>
        <end position="111"/>
    </location>
    <ligand>
        <name>substrate</name>
    </ligand>
</feature>
<feature type="binding site" evidence="1">
    <location>
        <position position="130"/>
    </location>
    <ligand>
        <name>substrate</name>
    </ligand>
</feature>
<feature type="binding site" evidence="1">
    <location>
        <position position="131"/>
    </location>
    <ligand>
        <name>Mg(2+)</name>
        <dbReference type="ChEBI" id="CHEBI:18420"/>
        <label>2</label>
    </ligand>
</feature>
<feature type="binding site" evidence="1">
    <location>
        <position position="260"/>
    </location>
    <ligand>
        <name>substrate</name>
    </ligand>
</feature>
<feature type="binding site" evidence="1">
    <location>
        <position position="288"/>
    </location>
    <ligand>
        <name>Mg(2+)</name>
        <dbReference type="ChEBI" id="CHEBI:18420"/>
        <label>2</label>
    </ligand>
</feature>
<feature type="binding site" evidence="1">
    <location>
        <begin position="332"/>
        <end position="334"/>
    </location>
    <ligand>
        <name>substrate</name>
    </ligand>
</feature>
<feature type="binding site" evidence="1">
    <location>
        <position position="520"/>
    </location>
    <ligand>
        <name>ATP</name>
        <dbReference type="ChEBI" id="CHEBI:30616"/>
    </ligand>
</feature>
<feature type="binding site" evidence="1">
    <location>
        <position position="557"/>
    </location>
    <ligand>
        <name>ATP</name>
        <dbReference type="ChEBI" id="CHEBI:30616"/>
    </ligand>
</feature>
<feature type="binding site" evidence="1">
    <location>
        <position position="558"/>
    </location>
    <ligand>
        <name>Mg(2+)</name>
        <dbReference type="ChEBI" id="CHEBI:18420"/>
        <label>1</label>
    </ligand>
</feature>
<feature type="binding site" evidence="1">
    <location>
        <position position="560"/>
    </location>
    <ligand>
        <name>substrate</name>
    </ligand>
</feature>
<keyword id="KW-0067">ATP-binding</keyword>
<keyword id="KW-0963">Cytoplasm</keyword>
<keyword id="KW-0436">Ligase</keyword>
<keyword id="KW-0460">Magnesium</keyword>
<keyword id="KW-0479">Metal-binding</keyword>
<keyword id="KW-0547">Nucleotide-binding</keyword>
<keyword id="KW-0658">Purine biosynthesis</keyword>
<sequence length="762" mass="80210">MSAHQVDTVTHASADPDAAQPFKELGLKDDEYARIKEILGRRPTDAELAMYSVMWSEHCSYKSSKVHLGYFGKTTTDEMRANMLAGIGENAGVVDIGDGWAVTFKVESHNHPSYVEPYQGAATGVGGIVRDIMAMGARPIAVMDQLRFGAADAPDTRRVVDGVVRGVGGYGNSLGLPNIGGETVFDESYAGNPLVNALAAGVMRVEDLHLAFASGAGNKIILFGARTGLDGIGGVSVLASATFDDEGGDTGGRKKLPAVQVGDPFTEKVLIECCLDLYKAGLVVGIQDLGGAGLSCATSELAAAGDGGMHINLEKVPMRATGMTPAEVLSSESQERMCAVVTPENVDAFMEVCKKWDVLATDIGEVTDGEHLTISWHGETVVDVPPRTVAHEGPVYNRPVERPASQDALIANTTAGLKRPETDAELEATLLKMIASPALCSRKWITEQYDRYVRGNTVLAENADGGVIRIDEKTGRGIALSTDASGRYTALDPYTGAQLALAEAFRNVAVTGATPKAVSNCLNFGSPEDPGVMWQFQQAVRGLADGCATLGIPVTGGNVSFYNQTGSTAILPTPVVAVLGVIDDVHRRIPTGLGLEPGETLILLGDTHDEFDGSIWSQVEHGHLGGVPPKVDLAREQLLADILLASSRDGLVTAAHDLSEGGLAQAVVEAALAGETGCRILIPEGADPFVTLFSESSGRVLVAVPRTEETRFTGMCTARGLPWTRIGVVDEGSDSVEVQGHFSVTMAKLREAFEGTLPALFG</sequence>
<name>PURL_RHOE4</name>
<protein>
    <recommendedName>
        <fullName evidence="1">Phosphoribosylformylglycinamidine synthase subunit PurL</fullName>
        <shortName evidence="1">FGAM synthase</shortName>
        <ecNumber evidence="1">6.3.5.3</ecNumber>
    </recommendedName>
    <alternativeName>
        <fullName evidence="1">Formylglycinamide ribonucleotide amidotransferase subunit II</fullName>
        <shortName evidence="1">FGAR amidotransferase II</shortName>
        <shortName evidence="1">FGAR-AT II</shortName>
    </alternativeName>
    <alternativeName>
        <fullName evidence="1">Glutamine amidotransferase PurL</fullName>
    </alternativeName>
    <alternativeName>
        <fullName evidence="1">Phosphoribosylformylglycinamidine synthase subunit II</fullName>
    </alternativeName>
</protein>
<reference key="1">
    <citation type="submission" date="2005-03" db="EMBL/GenBank/DDBJ databases">
        <title>Comparison of the complete genome sequences of Rhodococcus erythropolis PR4 and Rhodococcus opacus B4.</title>
        <authorList>
            <person name="Takarada H."/>
            <person name="Sekine M."/>
            <person name="Hosoyama A."/>
            <person name="Yamada R."/>
            <person name="Fujisawa T."/>
            <person name="Omata S."/>
            <person name="Shimizu A."/>
            <person name="Tsukatani N."/>
            <person name="Tanikawa S."/>
            <person name="Fujita N."/>
            <person name="Harayama S."/>
        </authorList>
    </citation>
    <scope>NUCLEOTIDE SEQUENCE [LARGE SCALE GENOMIC DNA]</scope>
    <source>
        <strain>PR4 / NBRC 100887</strain>
    </source>
</reference>
<evidence type="ECO:0000255" key="1">
    <source>
        <dbReference type="HAMAP-Rule" id="MF_00420"/>
    </source>
</evidence>
<organism>
    <name type="scientific">Rhodococcus erythropolis (strain PR4 / NBRC 100887)</name>
    <dbReference type="NCBI Taxonomy" id="234621"/>
    <lineage>
        <taxon>Bacteria</taxon>
        <taxon>Bacillati</taxon>
        <taxon>Actinomycetota</taxon>
        <taxon>Actinomycetes</taxon>
        <taxon>Mycobacteriales</taxon>
        <taxon>Nocardiaceae</taxon>
        <taxon>Rhodococcus</taxon>
        <taxon>Rhodococcus erythropolis group</taxon>
    </lineage>
</organism>
<comment type="function">
    <text evidence="1">Part of the phosphoribosylformylglycinamidine synthase complex involved in the purines biosynthetic pathway. Catalyzes the ATP-dependent conversion of formylglycinamide ribonucleotide (FGAR) and glutamine to yield formylglycinamidine ribonucleotide (FGAM) and glutamate. The FGAM synthase complex is composed of three subunits. PurQ produces an ammonia molecule by converting glutamine to glutamate. PurL transfers the ammonia molecule to FGAR to form FGAM in an ATP-dependent manner. PurS interacts with PurQ and PurL and is thought to assist in the transfer of the ammonia molecule from PurQ to PurL.</text>
</comment>
<comment type="catalytic activity">
    <reaction evidence="1">
        <text>N(2)-formyl-N(1)-(5-phospho-beta-D-ribosyl)glycinamide + L-glutamine + ATP + H2O = 2-formamido-N(1)-(5-O-phospho-beta-D-ribosyl)acetamidine + L-glutamate + ADP + phosphate + H(+)</text>
        <dbReference type="Rhea" id="RHEA:17129"/>
        <dbReference type="ChEBI" id="CHEBI:15377"/>
        <dbReference type="ChEBI" id="CHEBI:15378"/>
        <dbReference type="ChEBI" id="CHEBI:29985"/>
        <dbReference type="ChEBI" id="CHEBI:30616"/>
        <dbReference type="ChEBI" id="CHEBI:43474"/>
        <dbReference type="ChEBI" id="CHEBI:58359"/>
        <dbReference type="ChEBI" id="CHEBI:147286"/>
        <dbReference type="ChEBI" id="CHEBI:147287"/>
        <dbReference type="ChEBI" id="CHEBI:456216"/>
        <dbReference type="EC" id="6.3.5.3"/>
    </reaction>
</comment>
<comment type="pathway">
    <text evidence="1">Purine metabolism; IMP biosynthesis via de novo pathway; 5-amino-1-(5-phospho-D-ribosyl)imidazole from N(2)-formyl-N(1)-(5-phospho-D-ribosyl)glycinamide: step 1/2.</text>
</comment>
<comment type="subunit">
    <text evidence="1">Monomer. Part of the FGAM synthase complex composed of 1 PurL, 1 PurQ and 2 PurS subunits.</text>
</comment>
<comment type="subcellular location">
    <subcellularLocation>
        <location evidence="1">Cytoplasm</location>
    </subcellularLocation>
</comment>
<comment type="similarity">
    <text evidence="1">Belongs to the FGAMS family.</text>
</comment>
<dbReference type="EC" id="6.3.5.3" evidence="1"/>
<dbReference type="EMBL" id="AP008957">
    <property type="protein sequence ID" value="BAH35540.1"/>
    <property type="molecule type" value="Genomic_DNA"/>
</dbReference>
<dbReference type="RefSeq" id="WP_019745104.1">
    <property type="nucleotide sequence ID" value="NC_012490.1"/>
</dbReference>
<dbReference type="SMR" id="C0ZP44"/>
<dbReference type="GeneID" id="57485280"/>
<dbReference type="KEGG" id="rer:RER_48320"/>
<dbReference type="eggNOG" id="COG0046">
    <property type="taxonomic scope" value="Bacteria"/>
</dbReference>
<dbReference type="HOGENOM" id="CLU_003100_0_1_11"/>
<dbReference type="UniPathway" id="UPA00074">
    <property type="reaction ID" value="UER00128"/>
</dbReference>
<dbReference type="Proteomes" id="UP000002204">
    <property type="component" value="Chromosome"/>
</dbReference>
<dbReference type="GO" id="GO:0005737">
    <property type="term" value="C:cytoplasm"/>
    <property type="evidence" value="ECO:0007669"/>
    <property type="project" value="UniProtKB-SubCell"/>
</dbReference>
<dbReference type="GO" id="GO:0005524">
    <property type="term" value="F:ATP binding"/>
    <property type="evidence" value="ECO:0007669"/>
    <property type="project" value="UniProtKB-UniRule"/>
</dbReference>
<dbReference type="GO" id="GO:0000287">
    <property type="term" value="F:magnesium ion binding"/>
    <property type="evidence" value="ECO:0007669"/>
    <property type="project" value="UniProtKB-UniRule"/>
</dbReference>
<dbReference type="GO" id="GO:0004642">
    <property type="term" value="F:phosphoribosylformylglycinamidine synthase activity"/>
    <property type="evidence" value="ECO:0007669"/>
    <property type="project" value="UniProtKB-UniRule"/>
</dbReference>
<dbReference type="GO" id="GO:0006189">
    <property type="term" value="P:'de novo' IMP biosynthetic process"/>
    <property type="evidence" value="ECO:0007669"/>
    <property type="project" value="UniProtKB-UniRule"/>
</dbReference>
<dbReference type="CDD" id="cd02203">
    <property type="entry name" value="PurL_repeat1"/>
    <property type="match status" value="1"/>
</dbReference>
<dbReference type="CDD" id="cd02204">
    <property type="entry name" value="PurL_repeat2"/>
    <property type="match status" value="1"/>
</dbReference>
<dbReference type="FunFam" id="3.30.1330.10:FF:000004">
    <property type="entry name" value="Phosphoribosylformylglycinamidine synthase subunit PurL"/>
    <property type="match status" value="1"/>
</dbReference>
<dbReference type="Gene3D" id="3.90.650.10">
    <property type="entry name" value="PurM-like C-terminal domain"/>
    <property type="match status" value="2"/>
</dbReference>
<dbReference type="Gene3D" id="3.30.1330.10">
    <property type="entry name" value="PurM-like, N-terminal domain"/>
    <property type="match status" value="2"/>
</dbReference>
<dbReference type="HAMAP" id="MF_00420">
    <property type="entry name" value="PurL_2"/>
    <property type="match status" value="1"/>
</dbReference>
<dbReference type="InterPro" id="IPR010074">
    <property type="entry name" value="PRibForGlyAmidine_synth_PurL"/>
</dbReference>
<dbReference type="InterPro" id="IPR041609">
    <property type="entry name" value="PurL_linker"/>
</dbReference>
<dbReference type="InterPro" id="IPR010918">
    <property type="entry name" value="PurM-like_C_dom"/>
</dbReference>
<dbReference type="InterPro" id="IPR036676">
    <property type="entry name" value="PurM-like_C_sf"/>
</dbReference>
<dbReference type="InterPro" id="IPR016188">
    <property type="entry name" value="PurM-like_N"/>
</dbReference>
<dbReference type="InterPro" id="IPR036921">
    <property type="entry name" value="PurM-like_N_sf"/>
</dbReference>
<dbReference type="NCBIfam" id="TIGR01736">
    <property type="entry name" value="FGAM_synth_II"/>
    <property type="match status" value="1"/>
</dbReference>
<dbReference type="NCBIfam" id="NF002290">
    <property type="entry name" value="PRK01213.1"/>
    <property type="match status" value="1"/>
</dbReference>
<dbReference type="PANTHER" id="PTHR43555">
    <property type="entry name" value="PHOSPHORIBOSYLFORMYLGLYCINAMIDINE SYNTHASE SUBUNIT PURL"/>
    <property type="match status" value="1"/>
</dbReference>
<dbReference type="PANTHER" id="PTHR43555:SF1">
    <property type="entry name" value="PHOSPHORIBOSYLFORMYLGLYCINAMIDINE SYNTHASE SUBUNIT PURL"/>
    <property type="match status" value="1"/>
</dbReference>
<dbReference type="Pfam" id="PF00586">
    <property type="entry name" value="AIRS"/>
    <property type="match status" value="2"/>
</dbReference>
<dbReference type="Pfam" id="PF02769">
    <property type="entry name" value="AIRS_C"/>
    <property type="match status" value="2"/>
</dbReference>
<dbReference type="Pfam" id="PF18072">
    <property type="entry name" value="FGAR-AT_linker"/>
    <property type="match status" value="1"/>
</dbReference>
<dbReference type="PIRSF" id="PIRSF001587">
    <property type="entry name" value="FGAM_synthase_II"/>
    <property type="match status" value="1"/>
</dbReference>
<dbReference type="SUPFAM" id="SSF56042">
    <property type="entry name" value="PurM C-terminal domain-like"/>
    <property type="match status" value="2"/>
</dbReference>
<dbReference type="SUPFAM" id="SSF55326">
    <property type="entry name" value="PurM N-terminal domain-like"/>
    <property type="match status" value="2"/>
</dbReference>
<accession>C0ZP44</accession>
<gene>
    <name evidence="1" type="primary">purL</name>
    <name type="ordered locus">RER_48320</name>
</gene>